<organism>
    <name type="scientific">Staphylococcus aureus (strain Mu50 / ATCC 700699)</name>
    <dbReference type="NCBI Taxonomy" id="158878"/>
    <lineage>
        <taxon>Bacteria</taxon>
        <taxon>Bacillati</taxon>
        <taxon>Bacillota</taxon>
        <taxon>Bacilli</taxon>
        <taxon>Bacillales</taxon>
        <taxon>Staphylococcaceae</taxon>
        <taxon>Staphylococcus</taxon>
    </lineage>
</organism>
<feature type="chain" id="PRO_0000109412" description="Pyridoxal 5'-phosphate synthase subunit PdxS">
    <location>
        <begin position="1"/>
        <end position="295"/>
    </location>
</feature>
<feature type="active site" description="Schiff-base intermediate with D-ribose 5-phosphate" evidence="1">
    <location>
        <position position="82"/>
    </location>
</feature>
<feature type="binding site" evidence="1">
    <location>
        <position position="25"/>
    </location>
    <ligand>
        <name>D-ribose 5-phosphate</name>
        <dbReference type="ChEBI" id="CHEBI:78346"/>
    </ligand>
</feature>
<feature type="binding site" evidence="1">
    <location>
        <position position="154"/>
    </location>
    <ligand>
        <name>D-ribose 5-phosphate</name>
        <dbReference type="ChEBI" id="CHEBI:78346"/>
    </ligand>
</feature>
<feature type="binding site" evidence="1">
    <location>
        <position position="166"/>
    </location>
    <ligand>
        <name>D-glyceraldehyde 3-phosphate</name>
        <dbReference type="ChEBI" id="CHEBI:59776"/>
    </ligand>
</feature>
<feature type="binding site" evidence="1">
    <location>
        <position position="215"/>
    </location>
    <ligand>
        <name>D-ribose 5-phosphate</name>
        <dbReference type="ChEBI" id="CHEBI:78346"/>
    </ligand>
</feature>
<feature type="binding site" evidence="1">
    <location>
        <begin position="236"/>
        <end position="237"/>
    </location>
    <ligand>
        <name>D-ribose 5-phosphate</name>
        <dbReference type="ChEBI" id="CHEBI:78346"/>
    </ligand>
</feature>
<dbReference type="EC" id="4.3.3.6" evidence="1"/>
<dbReference type="EMBL" id="BA000017">
    <property type="protein sequence ID" value="BAB56681.1"/>
    <property type="molecule type" value="Genomic_DNA"/>
</dbReference>
<dbReference type="RefSeq" id="WP_000034728.1">
    <property type="nucleotide sequence ID" value="NC_002758.2"/>
</dbReference>
<dbReference type="SMR" id="P60797"/>
<dbReference type="GeneID" id="66838811"/>
<dbReference type="KEGG" id="sav:SAV0519"/>
<dbReference type="HOGENOM" id="CLU_055352_1_0_9"/>
<dbReference type="PhylomeDB" id="P60797"/>
<dbReference type="UniPathway" id="UPA00245"/>
<dbReference type="Proteomes" id="UP000002481">
    <property type="component" value="Chromosome"/>
</dbReference>
<dbReference type="GO" id="GO:0036381">
    <property type="term" value="F:pyridoxal 5'-phosphate synthase (glutamine hydrolysing) activity"/>
    <property type="evidence" value="ECO:0007669"/>
    <property type="project" value="UniProtKB-UniRule"/>
</dbReference>
<dbReference type="GO" id="GO:0006520">
    <property type="term" value="P:amino acid metabolic process"/>
    <property type="evidence" value="ECO:0007669"/>
    <property type="project" value="TreeGrafter"/>
</dbReference>
<dbReference type="GO" id="GO:0042823">
    <property type="term" value="P:pyridoxal phosphate biosynthetic process"/>
    <property type="evidence" value="ECO:0007669"/>
    <property type="project" value="UniProtKB-UniRule"/>
</dbReference>
<dbReference type="GO" id="GO:0008615">
    <property type="term" value="P:pyridoxine biosynthetic process"/>
    <property type="evidence" value="ECO:0007669"/>
    <property type="project" value="TreeGrafter"/>
</dbReference>
<dbReference type="CDD" id="cd04727">
    <property type="entry name" value="pdxS"/>
    <property type="match status" value="1"/>
</dbReference>
<dbReference type="FunFam" id="3.20.20.70:FF:000001">
    <property type="entry name" value="Pyridoxine biosynthesis protein PDX1"/>
    <property type="match status" value="1"/>
</dbReference>
<dbReference type="Gene3D" id="3.20.20.70">
    <property type="entry name" value="Aldolase class I"/>
    <property type="match status" value="1"/>
</dbReference>
<dbReference type="HAMAP" id="MF_01824">
    <property type="entry name" value="PdxS"/>
    <property type="match status" value="1"/>
</dbReference>
<dbReference type="InterPro" id="IPR013785">
    <property type="entry name" value="Aldolase_TIM"/>
</dbReference>
<dbReference type="InterPro" id="IPR001852">
    <property type="entry name" value="PdxS/SNZ"/>
</dbReference>
<dbReference type="InterPro" id="IPR033755">
    <property type="entry name" value="PdxS/SNZ_N"/>
</dbReference>
<dbReference type="InterPro" id="IPR011060">
    <property type="entry name" value="RibuloseP-bd_barrel"/>
</dbReference>
<dbReference type="NCBIfam" id="NF003215">
    <property type="entry name" value="PRK04180.1"/>
    <property type="match status" value="1"/>
</dbReference>
<dbReference type="NCBIfam" id="TIGR00343">
    <property type="entry name" value="pyridoxal 5'-phosphate synthase lyase subunit PdxS"/>
    <property type="match status" value="1"/>
</dbReference>
<dbReference type="PANTHER" id="PTHR31829">
    <property type="entry name" value="PYRIDOXAL 5'-PHOSPHATE SYNTHASE SUBUNIT SNZ1-RELATED"/>
    <property type="match status" value="1"/>
</dbReference>
<dbReference type="PANTHER" id="PTHR31829:SF0">
    <property type="entry name" value="PYRIDOXAL 5'-PHOSPHATE SYNTHASE SUBUNIT SNZ1-RELATED"/>
    <property type="match status" value="1"/>
</dbReference>
<dbReference type="Pfam" id="PF01680">
    <property type="entry name" value="SOR_SNZ"/>
    <property type="match status" value="1"/>
</dbReference>
<dbReference type="PIRSF" id="PIRSF029271">
    <property type="entry name" value="Pdx1"/>
    <property type="match status" value="1"/>
</dbReference>
<dbReference type="SUPFAM" id="SSF51366">
    <property type="entry name" value="Ribulose-phoshate binding barrel"/>
    <property type="match status" value="1"/>
</dbReference>
<dbReference type="PROSITE" id="PS01235">
    <property type="entry name" value="PDXS_SNZ_1"/>
    <property type="match status" value="1"/>
</dbReference>
<dbReference type="PROSITE" id="PS51129">
    <property type="entry name" value="PDXS_SNZ_2"/>
    <property type="match status" value="1"/>
</dbReference>
<gene>
    <name evidence="1" type="primary">pdxS</name>
    <name type="ordered locus">SAV0519</name>
</gene>
<proteinExistence type="inferred from homology"/>
<sequence length="295" mass="31993">MSKIIGSDRVKRGMAEMQKGGVIMDVVNAEQARIAEEAGAVAVMALERVPSDIRAAGGVARMANPKIVEEVMNAVSIPVMAKARIGHITEARVLEAMGVDYIDESEVLTPADEEYHLRKDQFTVPFVCGCRNLGEAARRIGEGAAMLRTKGEPGTGNIVEAVRHMRQVNSEVSRLTVMNDDEIMTFAKDIGAPYEILKQIKDNGRLPVVNFAAGGVATPQDAALMMELGADGVFVGSGIFKSEDPEKFAKAIVQATTHYQDYELIGRLASELGTAMKGLDINQLSLEERMQERGW</sequence>
<name>PDXS_STAAM</name>
<comment type="function">
    <text evidence="1">Catalyzes the formation of pyridoxal 5'-phosphate from ribose 5-phosphate (RBP), glyceraldehyde 3-phosphate (G3P) and ammonia. The ammonia is provided by the PdxT subunit. Can also use ribulose 5-phosphate and dihydroxyacetone phosphate as substrates, resulting from enzyme-catalyzed isomerization of RBP and G3P, respectively.</text>
</comment>
<comment type="catalytic activity">
    <reaction evidence="1">
        <text>aldehydo-D-ribose 5-phosphate + D-glyceraldehyde 3-phosphate + L-glutamine = pyridoxal 5'-phosphate + L-glutamate + phosphate + 3 H2O + H(+)</text>
        <dbReference type="Rhea" id="RHEA:31507"/>
        <dbReference type="ChEBI" id="CHEBI:15377"/>
        <dbReference type="ChEBI" id="CHEBI:15378"/>
        <dbReference type="ChEBI" id="CHEBI:29985"/>
        <dbReference type="ChEBI" id="CHEBI:43474"/>
        <dbReference type="ChEBI" id="CHEBI:58273"/>
        <dbReference type="ChEBI" id="CHEBI:58359"/>
        <dbReference type="ChEBI" id="CHEBI:59776"/>
        <dbReference type="ChEBI" id="CHEBI:597326"/>
        <dbReference type="EC" id="4.3.3.6"/>
    </reaction>
</comment>
<comment type="pathway">
    <text evidence="1">Cofactor biosynthesis; pyridoxal 5'-phosphate biosynthesis.</text>
</comment>
<comment type="subunit">
    <text evidence="1">In the presence of PdxT, forms a dodecamer of heterodimers.</text>
</comment>
<comment type="similarity">
    <text evidence="1">Belongs to the PdxS/SNZ family.</text>
</comment>
<accession>P60797</accession>
<accession>Q99W84</accession>
<keyword id="KW-0456">Lyase</keyword>
<keyword id="KW-0663">Pyridoxal phosphate</keyword>
<keyword id="KW-0704">Schiff base</keyword>
<reference key="1">
    <citation type="journal article" date="2001" name="Lancet">
        <title>Whole genome sequencing of meticillin-resistant Staphylococcus aureus.</title>
        <authorList>
            <person name="Kuroda M."/>
            <person name="Ohta T."/>
            <person name="Uchiyama I."/>
            <person name="Baba T."/>
            <person name="Yuzawa H."/>
            <person name="Kobayashi I."/>
            <person name="Cui L."/>
            <person name="Oguchi A."/>
            <person name="Aoki K."/>
            <person name="Nagai Y."/>
            <person name="Lian J.-Q."/>
            <person name="Ito T."/>
            <person name="Kanamori M."/>
            <person name="Matsumaru H."/>
            <person name="Maruyama A."/>
            <person name="Murakami H."/>
            <person name="Hosoyama A."/>
            <person name="Mizutani-Ui Y."/>
            <person name="Takahashi N.K."/>
            <person name="Sawano T."/>
            <person name="Inoue R."/>
            <person name="Kaito C."/>
            <person name="Sekimizu K."/>
            <person name="Hirakawa H."/>
            <person name="Kuhara S."/>
            <person name="Goto S."/>
            <person name="Yabuzaki J."/>
            <person name="Kanehisa M."/>
            <person name="Yamashita A."/>
            <person name="Oshima K."/>
            <person name="Furuya K."/>
            <person name="Yoshino C."/>
            <person name="Shiba T."/>
            <person name="Hattori M."/>
            <person name="Ogasawara N."/>
            <person name="Hayashi H."/>
            <person name="Hiramatsu K."/>
        </authorList>
    </citation>
    <scope>NUCLEOTIDE SEQUENCE [LARGE SCALE GENOMIC DNA]</scope>
    <source>
        <strain>Mu50 / ATCC 700699</strain>
    </source>
</reference>
<evidence type="ECO:0000255" key="1">
    <source>
        <dbReference type="HAMAP-Rule" id="MF_01824"/>
    </source>
</evidence>
<protein>
    <recommendedName>
        <fullName evidence="1">Pyridoxal 5'-phosphate synthase subunit PdxS</fullName>
        <shortName evidence="1">PLP synthase subunit PdxS</shortName>
        <ecNumber evidence="1">4.3.3.6</ecNumber>
    </recommendedName>
    <alternativeName>
        <fullName evidence="1">Pdx1</fullName>
    </alternativeName>
</protein>